<protein>
    <recommendedName>
        <fullName evidence="5">Protein N-terminal glutamine amidohydrolase</fullName>
        <ecNumber evidence="3">3.5.1.122</ecNumber>
    </recommendedName>
    <alternativeName>
        <fullName evidence="5">Protein NH2-terminal glutamine deamidase</fullName>
        <shortName evidence="5">N-terminal Gln amidase</shortName>
        <shortName evidence="5">Nt(Q)-amidase</shortName>
    </alternativeName>
</protein>
<keyword id="KW-0007">Acetylation</keyword>
<keyword id="KW-0378">Hydrolase</keyword>
<keyword id="KW-0611">Plant defense</keyword>
<keyword id="KW-1185">Reference proteome</keyword>
<comment type="function">
    <text evidence="3">Mediates the side-chain deamidation of N-terminal glutamine residues to glutamate, an important step in N-end rule pathway of protein degradation (PubMed:30117535). Conversion of the resulting N-terminal glutamine to glutamate renders the protein susceptible to arginylation, polyubiquitination and degradation as specified by the N-end rule (PubMed:30117535). Does not act on substrates with internal or C-terminal glutamine and does not act on non-glutamine residues in any position (PubMed:30117535). Involved in immune response (PubMed:30117535). Controls the expression of specific defense-response genes, activates the synthesis pathway for the phytoalexin camalexin, and influences basal resistance to the hemibiotroph pathogen Pseudomonas syringae pv tomato (Pst) (PubMed:30117535).</text>
</comment>
<comment type="catalytic activity">
    <reaction evidence="3">
        <text>N-terminal L-glutaminyl-[protein] + H2O = N-terminal L-glutamyl-[protein] + NH4(+)</text>
        <dbReference type="Rhea" id="RHEA:50680"/>
        <dbReference type="Rhea" id="RHEA-COMP:12668"/>
        <dbReference type="Rhea" id="RHEA-COMP:12777"/>
        <dbReference type="ChEBI" id="CHEBI:15377"/>
        <dbReference type="ChEBI" id="CHEBI:28938"/>
        <dbReference type="ChEBI" id="CHEBI:64721"/>
        <dbReference type="ChEBI" id="CHEBI:64722"/>
        <dbReference type="EC" id="3.5.1.122"/>
    </reaction>
</comment>
<comment type="subunit">
    <text evidence="2">Monomer.</text>
</comment>
<comment type="similarity">
    <text evidence="5">Belongs to the NTAQ1 family.</text>
</comment>
<evidence type="ECO:0000250" key="1"/>
<evidence type="ECO:0000250" key="2">
    <source>
        <dbReference type="UniProtKB" id="Q96HA8"/>
    </source>
</evidence>
<evidence type="ECO:0000269" key="3">
    <source>
    </source>
</evidence>
<evidence type="ECO:0000303" key="4">
    <source>
    </source>
</evidence>
<evidence type="ECO:0000305" key="5"/>
<evidence type="ECO:0007744" key="6">
    <source>
    </source>
</evidence>
<accession>O22944</accession>
<accession>Q0WL89</accession>
<feature type="initiator methionine" description="Removed" evidence="6">
    <location>
        <position position="1"/>
    </location>
</feature>
<feature type="chain" id="PRO_0000381834" description="Protein N-terminal glutamine amidohydrolase">
    <location>
        <begin position="2"/>
        <end position="221"/>
    </location>
</feature>
<feature type="active site" evidence="1">
    <location>
        <position position="23"/>
    </location>
</feature>
<feature type="active site" evidence="1">
    <location>
        <position position="79"/>
    </location>
</feature>
<feature type="active site" evidence="1">
    <location>
        <position position="97"/>
    </location>
</feature>
<feature type="modified residue" description="N-acetylserine" evidence="6">
    <location>
        <position position="2"/>
    </location>
</feature>
<feature type="sequence conflict" description="In Ref. 4; BAF02118." evidence="5" ref="4">
    <original>E</original>
    <variation>G</variation>
    <location>
        <position position="114"/>
    </location>
</feature>
<name>NTAQ1_ARATH</name>
<sequence length="221" mass="24972">MSGVTSEPIAMDATRFQHTPYYCEENVYLLCKTLCENGVAEATCSDLFVVFISNEKKQVPLWHQKASTRADGVVLWDYHVICVQRKKESDSEPLVWDLDSTLPFPSPLASYVTETIQPSFQLFAEYQRFFRIVHAPLFFKHFASDRRHMKEPDGSWTAQPPPYEPIVAQDGILHNLSEYIAMSGADTLSSLDPETVTAAISQKLGVVVSHTQLQDLFTKLP</sequence>
<proteinExistence type="evidence at protein level"/>
<dbReference type="EC" id="3.5.1.122" evidence="3"/>
<dbReference type="EMBL" id="AC002339">
    <property type="protein sequence ID" value="AAC02771.1"/>
    <property type="molecule type" value="Genomic_DNA"/>
</dbReference>
<dbReference type="EMBL" id="CP002685">
    <property type="protein sequence ID" value="AEC10029.1"/>
    <property type="molecule type" value="Genomic_DNA"/>
</dbReference>
<dbReference type="EMBL" id="AY037225">
    <property type="protein sequence ID" value="AAK59825.1"/>
    <property type="molecule type" value="mRNA"/>
</dbReference>
<dbReference type="EMBL" id="AY060532">
    <property type="protein sequence ID" value="AAL31163.1"/>
    <property type="molecule type" value="mRNA"/>
</dbReference>
<dbReference type="EMBL" id="AK230318">
    <property type="protein sequence ID" value="BAF02118.1"/>
    <property type="molecule type" value="mRNA"/>
</dbReference>
<dbReference type="PIR" id="G84845">
    <property type="entry name" value="G84845"/>
</dbReference>
<dbReference type="RefSeq" id="NP_565959.1">
    <property type="nucleotide sequence ID" value="NM_129740.4"/>
</dbReference>
<dbReference type="SMR" id="O22944"/>
<dbReference type="BioGRID" id="4112">
    <property type="interactions" value="2"/>
</dbReference>
<dbReference type="FunCoup" id="O22944">
    <property type="interactions" value="2811"/>
</dbReference>
<dbReference type="IntAct" id="O22944">
    <property type="interactions" value="2"/>
</dbReference>
<dbReference type="STRING" id="3702.O22944"/>
<dbReference type="iPTMnet" id="O22944"/>
<dbReference type="PaxDb" id="3702-AT2G41760.1"/>
<dbReference type="ProteomicsDB" id="249161"/>
<dbReference type="EnsemblPlants" id="AT2G41760.1">
    <property type="protein sequence ID" value="AT2G41760.1"/>
    <property type="gene ID" value="AT2G41760"/>
</dbReference>
<dbReference type="GeneID" id="818775"/>
<dbReference type="Gramene" id="AT2G41760.1">
    <property type="protein sequence ID" value="AT2G41760.1"/>
    <property type="gene ID" value="AT2G41760"/>
</dbReference>
<dbReference type="KEGG" id="ath:AT2G41760"/>
<dbReference type="Araport" id="AT2G41760"/>
<dbReference type="TAIR" id="AT2G41760">
    <property type="gene designation" value="NTAQ1"/>
</dbReference>
<dbReference type="eggNOG" id="KOG3261">
    <property type="taxonomic scope" value="Eukaryota"/>
</dbReference>
<dbReference type="HOGENOM" id="CLU_091083_2_0_1"/>
<dbReference type="InParanoid" id="O22944"/>
<dbReference type="OMA" id="GWGTVYS"/>
<dbReference type="PhylomeDB" id="O22944"/>
<dbReference type="BRENDA" id="3.5.1.122">
    <property type="organism ID" value="399"/>
</dbReference>
<dbReference type="PRO" id="PR:O22944"/>
<dbReference type="Proteomes" id="UP000006548">
    <property type="component" value="Chromosome 2"/>
</dbReference>
<dbReference type="ExpressionAtlas" id="O22944">
    <property type="expression patterns" value="baseline and differential"/>
</dbReference>
<dbReference type="GO" id="GO:0008418">
    <property type="term" value="F:protein-N-terminal asparagine amidohydrolase activity"/>
    <property type="evidence" value="ECO:0007669"/>
    <property type="project" value="InterPro"/>
</dbReference>
<dbReference type="GO" id="GO:0070773">
    <property type="term" value="F:protein-N-terminal glutamine amidohydrolase activity"/>
    <property type="evidence" value="ECO:0007669"/>
    <property type="project" value="UniProtKB-EC"/>
</dbReference>
<dbReference type="GO" id="GO:0042742">
    <property type="term" value="P:defense response to bacterium"/>
    <property type="evidence" value="ECO:0000315"/>
    <property type="project" value="TAIR"/>
</dbReference>
<dbReference type="GO" id="GO:1901183">
    <property type="term" value="P:positive regulation of camalexin biosynthetic process"/>
    <property type="evidence" value="ECO:0000315"/>
    <property type="project" value="TAIR"/>
</dbReference>
<dbReference type="FunFam" id="3.10.620.10:FF:000001">
    <property type="entry name" value="Blast:Protein N-terminal glutamine amidohydrolase"/>
    <property type="match status" value="1"/>
</dbReference>
<dbReference type="Gene3D" id="3.10.620.10">
    <property type="entry name" value="Protein N-terminal glutamine amidohydrolase, alpha beta roll"/>
    <property type="match status" value="1"/>
</dbReference>
<dbReference type="InterPro" id="IPR037132">
    <property type="entry name" value="N_Gln_amidohydro_ab_roll_sf"/>
</dbReference>
<dbReference type="InterPro" id="IPR039733">
    <property type="entry name" value="NTAQ1"/>
</dbReference>
<dbReference type="InterPro" id="IPR023128">
    <property type="entry name" value="Prot_N_Gln_amidohydro_ab_roll"/>
</dbReference>
<dbReference type="PANTHER" id="PTHR13035">
    <property type="entry name" value="PROTEIN N-TERMINAL GLUTAMINE AMIDOHYDROLASE"/>
    <property type="match status" value="1"/>
</dbReference>
<dbReference type="PANTHER" id="PTHR13035:SF0">
    <property type="entry name" value="PROTEIN N-TERMINAL GLUTAMINE AMIDOHYDROLASE"/>
    <property type="match status" value="1"/>
</dbReference>
<dbReference type="Pfam" id="PF09764">
    <property type="entry name" value="Nt_Gln_amidase"/>
    <property type="match status" value="1"/>
</dbReference>
<gene>
    <name evidence="4" type="primary">NTAQ1</name>
    <name type="ordered locus">At2g41760</name>
    <name type="ORF">T11A7.14</name>
</gene>
<reference key="1">
    <citation type="journal article" date="1999" name="Nature">
        <title>Sequence and analysis of chromosome 2 of the plant Arabidopsis thaliana.</title>
        <authorList>
            <person name="Lin X."/>
            <person name="Kaul S."/>
            <person name="Rounsley S.D."/>
            <person name="Shea T.P."/>
            <person name="Benito M.-I."/>
            <person name="Town C.D."/>
            <person name="Fujii C.Y."/>
            <person name="Mason T.M."/>
            <person name="Bowman C.L."/>
            <person name="Barnstead M.E."/>
            <person name="Feldblyum T.V."/>
            <person name="Buell C.R."/>
            <person name="Ketchum K.A."/>
            <person name="Lee J.J."/>
            <person name="Ronning C.M."/>
            <person name="Koo H.L."/>
            <person name="Moffat K.S."/>
            <person name="Cronin L.A."/>
            <person name="Shen M."/>
            <person name="Pai G."/>
            <person name="Van Aken S."/>
            <person name="Umayam L."/>
            <person name="Tallon L.J."/>
            <person name="Gill J.E."/>
            <person name="Adams M.D."/>
            <person name="Carrera A.J."/>
            <person name="Creasy T.H."/>
            <person name="Goodman H.M."/>
            <person name="Somerville C.R."/>
            <person name="Copenhaver G.P."/>
            <person name="Preuss D."/>
            <person name="Nierman W.C."/>
            <person name="White O."/>
            <person name="Eisen J.A."/>
            <person name="Salzberg S.L."/>
            <person name="Fraser C.M."/>
            <person name="Venter J.C."/>
        </authorList>
    </citation>
    <scope>NUCLEOTIDE SEQUENCE [LARGE SCALE GENOMIC DNA]</scope>
    <source>
        <strain>cv. Columbia</strain>
    </source>
</reference>
<reference key="2">
    <citation type="journal article" date="2017" name="Plant J.">
        <title>Araport11: a complete reannotation of the Arabidopsis thaliana reference genome.</title>
        <authorList>
            <person name="Cheng C.Y."/>
            <person name="Krishnakumar V."/>
            <person name="Chan A.P."/>
            <person name="Thibaud-Nissen F."/>
            <person name="Schobel S."/>
            <person name="Town C.D."/>
        </authorList>
    </citation>
    <scope>GENOME REANNOTATION</scope>
    <source>
        <strain>cv. Columbia</strain>
    </source>
</reference>
<reference key="3">
    <citation type="journal article" date="2003" name="Science">
        <title>Empirical analysis of transcriptional activity in the Arabidopsis genome.</title>
        <authorList>
            <person name="Yamada K."/>
            <person name="Lim J."/>
            <person name="Dale J.M."/>
            <person name="Chen H."/>
            <person name="Shinn P."/>
            <person name="Palm C.J."/>
            <person name="Southwick A.M."/>
            <person name="Wu H.C."/>
            <person name="Kim C.J."/>
            <person name="Nguyen M."/>
            <person name="Pham P.K."/>
            <person name="Cheuk R.F."/>
            <person name="Karlin-Newmann G."/>
            <person name="Liu S.X."/>
            <person name="Lam B."/>
            <person name="Sakano H."/>
            <person name="Wu T."/>
            <person name="Yu G."/>
            <person name="Miranda M."/>
            <person name="Quach H.L."/>
            <person name="Tripp M."/>
            <person name="Chang C.H."/>
            <person name="Lee J.M."/>
            <person name="Toriumi M.J."/>
            <person name="Chan M.M."/>
            <person name="Tang C.C."/>
            <person name="Onodera C.S."/>
            <person name="Deng J.M."/>
            <person name="Akiyama K."/>
            <person name="Ansari Y."/>
            <person name="Arakawa T."/>
            <person name="Banh J."/>
            <person name="Banno F."/>
            <person name="Bowser L."/>
            <person name="Brooks S.Y."/>
            <person name="Carninci P."/>
            <person name="Chao Q."/>
            <person name="Choy N."/>
            <person name="Enju A."/>
            <person name="Goldsmith A.D."/>
            <person name="Gurjal M."/>
            <person name="Hansen N.F."/>
            <person name="Hayashizaki Y."/>
            <person name="Johnson-Hopson C."/>
            <person name="Hsuan V.W."/>
            <person name="Iida K."/>
            <person name="Karnes M."/>
            <person name="Khan S."/>
            <person name="Koesema E."/>
            <person name="Ishida J."/>
            <person name="Jiang P.X."/>
            <person name="Jones T."/>
            <person name="Kawai J."/>
            <person name="Kamiya A."/>
            <person name="Meyers C."/>
            <person name="Nakajima M."/>
            <person name="Narusaka M."/>
            <person name="Seki M."/>
            <person name="Sakurai T."/>
            <person name="Satou M."/>
            <person name="Tamse R."/>
            <person name="Vaysberg M."/>
            <person name="Wallender E.K."/>
            <person name="Wong C."/>
            <person name="Yamamura Y."/>
            <person name="Yuan S."/>
            <person name="Shinozaki K."/>
            <person name="Davis R.W."/>
            <person name="Theologis A."/>
            <person name="Ecker J.R."/>
        </authorList>
    </citation>
    <scope>NUCLEOTIDE SEQUENCE [LARGE SCALE MRNA]</scope>
    <source>
        <strain>cv. Columbia</strain>
    </source>
</reference>
<reference key="4">
    <citation type="submission" date="2006-07" db="EMBL/GenBank/DDBJ databases">
        <title>Large-scale analysis of RIKEN Arabidopsis full-length (RAFL) cDNAs.</title>
        <authorList>
            <person name="Totoki Y."/>
            <person name="Seki M."/>
            <person name="Ishida J."/>
            <person name="Nakajima M."/>
            <person name="Enju A."/>
            <person name="Kamiya A."/>
            <person name="Narusaka M."/>
            <person name="Shin-i T."/>
            <person name="Nakagawa M."/>
            <person name="Sakamoto N."/>
            <person name="Oishi K."/>
            <person name="Kohara Y."/>
            <person name="Kobayashi M."/>
            <person name="Toyoda A."/>
            <person name="Sakaki Y."/>
            <person name="Sakurai T."/>
            <person name="Iida K."/>
            <person name="Akiyama K."/>
            <person name="Satou M."/>
            <person name="Toyoda T."/>
            <person name="Konagaya A."/>
            <person name="Carninci P."/>
            <person name="Kawai J."/>
            <person name="Hayashizaki Y."/>
            <person name="Shinozaki K."/>
        </authorList>
    </citation>
    <scope>NUCLEOTIDE SEQUENCE [LARGE SCALE MRNA]</scope>
    <source>
        <strain>cv. Columbia</strain>
    </source>
</reference>
<reference key="5">
    <citation type="journal article" date="2012" name="Mol. Cell. Proteomics">
        <title>Comparative large-scale characterisation of plant vs. mammal proteins reveals similar and idiosyncratic N-alpha acetylation features.</title>
        <authorList>
            <person name="Bienvenut W.V."/>
            <person name="Sumpton D."/>
            <person name="Martinez A."/>
            <person name="Lilla S."/>
            <person name="Espagne C."/>
            <person name="Meinnel T."/>
            <person name="Giglione C."/>
        </authorList>
    </citation>
    <scope>ACETYLATION [LARGE SCALE ANALYSIS] AT SER-2</scope>
    <scope>CLEAVAGE OF INITIATOR METHIONINE [LARGE SCALE ANALYSIS]</scope>
    <scope>IDENTIFICATION BY MASS SPECTROMETRY [LARGE SCALE ANALYSIS]</scope>
</reference>
<reference key="6">
    <citation type="journal article" date="2019" name="New Phytol.">
        <title>Distinct branches of the N-end rule pathway modulate the plant immune response.</title>
        <authorList>
            <person name="Vicente J."/>
            <person name="Mendiondo G.M."/>
            <person name="Pauwels J."/>
            <person name="Pastor V."/>
            <person name="Izquierdo Y."/>
            <person name="Naumann C."/>
            <person name="Movahedi M."/>
            <person name="Rooney D."/>
            <person name="Gibbs D.J."/>
            <person name="Smart K."/>
            <person name="Bachmair A."/>
            <person name="Gray J.E."/>
            <person name="Dissmeyer N."/>
            <person name="Castresana C."/>
            <person name="Ray R.V."/>
            <person name="Gevaert K."/>
            <person name="Holdsworth M.J."/>
        </authorList>
    </citation>
    <scope>FUNCTION</scope>
    <scope>CATALYTIC ACTIVITY</scope>
</reference>
<organism>
    <name type="scientific">Arabidopsis thaliana</name>
    <name type="common">Mouse-ear cress</name>
    <dbReference type="NCBI Taxonomy" id="3702"/>
    <lineage>
        <taxon>Eukaryota</taxon>
        <taxon>Viridiplantae</taxon>
        <taxon>Streptophyta</taxon>
        <taxon>Embryophyta</taxon>
        <taxon>Tracheophyta</taxon>
        <taxon>Spermatophyta</taxon>
        <taxon>Magnoliopsida</taxon>
        <taxon>eudicotyledons</taxon>
        <taxon>Gunneridae</taxon>
        <taxon>Pentapetalae</taxon>
        <taxon>rosids</taxon>
        <taxon>malvids</taxon>
        <taxon>Brassicales</taxon>
        <taxon>Brassicaceae</taxon>
        <taxon>Camelineae</taxon>
        <taxon>Arabidopsis</taxon>
    </lineage>
</organism>